<protein>
    <recommendedName>
        <fullName evidence="1">Probable potassium transport system protein Kup 3</fullName>
    </recommendedName>
</protein>
<gene>
    <name evidence="1" type="primary">kup3</name>
    <name type="ordered locus">RHE_PA00104</name>
</gene>
<reference key="1">
    <citation type="journal article" date="2006" name="Proc. Natl. Acad. Sci. U.S.A.">
        <title>The partitioned Rhizobium etli genome: genetic and metabolic redundancy in seven interacting replicons.</title>
        <authorList>
            <person name="Gonzalez V."/>
            <person name="Santamaria R.I."/>
            <person name="Bustos P."/>
            <person name="Hernandez-Gonzalez I."/>
            <person name="Medrano-Soto A."/>
            <person name="Moreno-Hagelsieb G."/>
            <person name="Janga S.C."/>
            <person name="Ramirez M.A."/>
            <person name="Jimenez-Jacinto V."/>
            <person name="Collado-Vides J."/>
            <person name="Davila G."/>
        </authorList>
    </citation>
    <scope>NUCLEOTIDE SEQUENCE [LARGE SCALE GENOMIC DNA]</scope>
    <source>
        <strain>ATCC 51251 / DSM 11541 / JCM 21823 / NBRC 15573 / CFN 42</strain>
    </source>
</reference>
<geneLocation type="plasmid">
    <name>p42a</name>
</geneLocation>
<proteinExistence type="inferred from homology"/>
<organism>
    <name type="scientific">Rhizobium etli (strain ATCC 51251 / DSM 11541 / JCM 21823 / NBRC 15573 / CFN 42)</name>
    <dbReference type="NCBI Taxonomy" id="347834"/>
    <lineage>
        <taxon>Bacteria</taxon>
        <taxon>Pseudomonadati</taxon>
        <taxon>Pseudomonadota</taxon>
        <taxon>Alphaproteobacteria</taxon>
        <taxon>Hyphomicrobiales</taxon>
        <taxon>Rhizobiaceae</taxon>
        <taxon>Rhizobium/Agrobacterium group</taxon>
        <taxon>Rhizobium</taxon>
    </lineage>
</organism>
<comment type="function">
    <text evidence="1">Transport of potassium into the cell. Likely operates as a K(+):H(+) symporter.</text>
</comment>
<comment type="catalytic activity">
    <reaction evidence="1">
        <text>K(+)(in) + H(+)(in) = K(+)(out) + H(+)(out)</text>
        <dbReference type="Rhea" id="RHEA:28490"/>
        <dbReference type="ChEBI" id="CHEBI:15378"/>
        <dbReference type="ChEBI" id="CHEBI:29103"/>
    </reaction>
    <physiologicalReaction direction="right-to-left" evidence="1">
        <dbReference type="Rhea" id="RHEA:28492"/>
    </physiologicalReaction>
</comment>
<comment type="subcellular location">
    <subcellularLocation>
        <location evidence="1">Cell inner membrane</location>
        <topology evidence="1">Multi-pass membrane protein</topology>
    </subcellularLocation>
</comment>
<comment type="similarity">
    <text evidence="1">Belongs to the HAK/KUP transporter (TC 2.A.72) family.</text>
</comment>
<name>KUP3_RHIEC</name>
<sequence length="632" mass="69089">MSEESHPHEGHMTPSKLFYLALGSVGVVYGDIGTSPLYAFREALKPIAHDGLTRFEVISLISLMIWALTIIVTIKYVLFLLRADNEGEGGTLSLLALLMKTANGHTAILMLLGLMGAALFLGDAMITPALSVLSAVEGLKLVTPSLSDYIVPISVVILALLFVVQSRGTGAVARFFGPITAVWFLVMAAAGISHISDDFGILAAFNPYYAVSFLLHEGFYGVVVLGAVFLTVTGAEALYADLGHFGRRPIQWAWFLLVFPALTLNYLGQGALVLGKPETMSDPFYLMYPKWALLPVVILATAATIIASQAVITGAFSMVRQGINLGFLPRMEILFTSETNTGQIFVPSVNAVLFIGVIFLVLSFKTSDALATAYGISVTGAMVVTSIMAFEFVRARWNWSLPLAVVALAPLVVLELIFLGANLLKIHDGGYIPILIATAFTVIMWTWRRGTAILMEKTRHTDIPLPSFVSAIERKSDHSPAQVPGTAIFLTSDPESAPAALLHNLKHNHVLHDRNVILTIRTANKPRVLNQDRFRIEQISERFFRVELLFGYMEAQNVSQALAVLRKAGLKFDIMSTSFYLGRQKVIPDTNSGMPYWQDRFFILLANGASLPSDYFHLPANRVVELGSQIIV</sequence>
<accession>Q2K2I9</accession>
<keyword id="KW-0997">Cell inner membrane</keyword>
<keyword id="KW-1003">Cell membrane</keyword>
<keyword id="KW-0406">Ion transport</keyword>
<keyword id="KW-0472">Membrane</keyword>
<keyword id="KW-0614">Plasmid</keyword>
<keyword id="KW-0630">Potassium</keyword>
<keyword id="KW-0633">Potassium transport</keyword>
<keyword id="KW-1185">Reference proteome</keyword>
<keyword id="KW-0769">Symport</keyword>
<keyword id="KW-0812">Transmembrane</keyword>
<keyword id="KW-1133">Transmembrane helix</keyword>
<keyword id="KW-0813">Transport</keyword>
<feature type="chain" id="PRO_0000279820" description="Probable potassium transport system protein Kup 3">
    <location>
        <begin position="1"/>
        <end position="632"/>
    </location>
</feature>
<feature type="transmembrane region" description="Helical" evidence="1">
    <location>
        <begin position="17"/>
        <end position="37"/>
    </location>
</feature>
<feature type="transmembrane region" description="Helical" evidence="1">
    <location>
        <begin position="60"/>
        <end position="80"/>
    </location>
</feature>
<feature type="transmembrane region" description="Helical" evidence="1">
    <location>
        <begin position="106"/>
        <end position="126"/>
    </location>
</feature>
<feature type="transmembrane region" description="Helical" evidence="1">
    <location>
        <begin position="144"/>
        <end position="164"/>
    </location>
</feature>
<feature type="transmembrane region" description="Helical" evidence="1">
    <location>
        <begin position="175"/>
        <end position="195"/>
    </location>
</feature>
<feature type="transmembrane region" description="Helical" evidence="1">
    <location>
        <begin position="210"/>
        <end position="230"/>
    </location>
</feature>
<feature type="transmembrane region" description="Helical" evidence="1">
    <location>
        <begin position="254"/>
        <end position="274"/>
    </location>
</feature>
<feature type="transmembrane region" description="Helical" evidence="1">
    <location>
        <begin position="292"/>
        <end position="312"/>
    </location>
</feature>
<feature type="transmembrane region" description="Helical" evidence="1">
    <location>
        <begin position="344"/>
        <end position="364"/>
    </location>
</feature>
<feature type="transmembrane region" description="Helical" evidence="1">
    <location>
        <begin position="370"/>
        <end position="390"/>
    </location>
</feature>
<feature type="transmembrane region" description="Helical" evidence="1">
    <location>
        <begin position="401"/>
        <end position="421"/>
    </location>
</feature>
<feature type="transmembrane region" description="Helical" evidence="1">
    <location>
        <begin position="426"/>
        <end position="446"/>
    </location>
</feature>
<dbReference type="EMBL" id="CP000134">
    <property type="protein sequence ID" value="ABC92968.1"/>
    <property type="molecule type" value="Genomic_DNA"/>
</dbReference>
<dbReference type="RefSeq" id="WP_011427392.1">
    <property type="nucleotide sequence ID" value="NC_007762.1"/>
</dbReference>
<dbReference type="KEGG" id="ret:RHE_PA00104"/>
<dbReference type="HOGENOM" id="CLU_008142_4_2_5"/>
<dbReference type="OrthoDB" id="9805577at2"/>
<dbReference type="Proteomes" id="UP000001936">
    <property type="component" value="Plasmid p42a"/>
</dbReference>
<dbReference type="GO" id="GO:0005886">
    <property type="term" value="C:plasma membrane"/>
    <property type="evidence" value="ECO:0007669"/>
    <property type="project" value="UniProtKB-SubCell"/>
</dbReference>
<dbReference type="GO" id="GO:0015079">
    <property type="term" value="F:potassium ion transmembrane transporter activity"/>
    <property type="evidence" value="ECO:0007669"/>
    <property type="project" value="UniProtKB-UniRule"/>
</dbReference>
<dbReference type="GO" id="GO:0015293">
    <property type="term" value="F:symporter activity"/>
    <property type="evidence" value="ECO:0007669"/>
    <property type="project" value="UniProtKB-UniRule"/>
</dbReference>
<dbReference type="HAMAP" id="MF_01522">
    <property type="entry name" value="Kup"/>
    <property type="match status" value="1"/>
</dbReference>
<dbReference type="InterPro" id="IPR003855">
    <property type="entry name" value="K+_transporter"/>
</dbReference>
<dbReference type="InterPro" id="IPR053952">
    <property type="entry name" value="K_trans_C"/>
</dbReference>
<dbReference type="InterPro" id="IPR053951">
    <property type="entry name" value="K_trans_N"/>
</dbReference>
<dbReference type="InterPro" id="IPR023051">
    <property type="entry name" value="Kup"/>
</dbReference>
<dbReference type="PANTHER" id="PTHR30540:SF79">
    <property type="entry name" value="LOW AFFINITY POTASSIUM TRANSPORT SYSTEM PROTEIN KUP"/>
    <property type="match status" value="1"/>
</dbReference>
<dbReference type="PANTHER" id="PTHR30540">
    <property type="entry name" value="OSMOTIC STRESS POTASSIUM TRANSPORTER"/>
    <property type="match status" value="1"/>
</dbReference>
<dbReference type="Pfam" id="PF02705">
    <property type="entry name" value="K_trans"/>
    <property type="match status" value="1"/>
</dbReference>
<dbReference type="Pfam" id="PF22776">
    <property type="entry name" value="K_trans_C"/>
    <property type="match status" value="1"/>
</dbReference>
<evidence type="ECO:0000255" key="1">
    <source>
        <dbReference type="HAMAP-Rule" id="MF_01522"/>
    </source>
</evidence>